<proteinExistence type="inferred from homology"/>
<accession>A0A2I1D2Q5</accession>
<dbReference type="EC" id="2.1.1.-" evidence="4"/>
<dbReference type="EMBL" id="MSFM01000006">
    <property type="protein sequence ID" value="PKY04128.1"/>
    <property type="molecule type" value="Genomic_DNA"/>
</dbReference>
<dbReference type="SMR" id="A0A2I1D2Q5"/>
<dbReference type="VEuPathDB" id="FungiDB:P168DRAFT_304453"/>
<dbReference type="OrthoDB" id="4499963at2759"/>
<dbReference type="Proteomes" id="UP000234254">
    <property type="component" value="Unassembled WGS sequence"/>
</dbReference>
<dbReference type="GO" id="GO:0008168">
    <property type="term" value="F:methyltransferase activity"/>
    <property type="evidence" value="ECO:0007669"/>
    <property type="project" value="UniProtKB-KW"/>
</dbReference>
<dbReference type="GO" id="GO:0032259">
    <property type="term" value="P:methylation"/>
    <property type="evidence" value="ECO:0007669"/>
    <property type="project" value="UniProtKB-KW"/>
</dbReference>
<dbReference type="CDD" id="cd02440">
    <property type="entry name" value="AdoMet_MTases"/>
    <property type="match status" value="1"/>
</dbReference>
<dbReference type="Gene3D" id="3.40.50.150">
    <property type="entry name" value="Vaccinia Virus protein VP39"/>
    <property type="match status" value="1"/>
</dbReference>
<dbReference type="Gene3D" id="1.10.10.10">
    <property type="entry name" value="Winged helix-like DNA-binding domain superfamily/Winged helix DNA-binding domain"/>
    <property type="match status" value="1"/>
</dbReference>
<dbReference type="InterPro" id="IPR041698">
    <property type="entry name" value="Methyltransf_25"/>
</dbReference>
<dbReference type="InterPro" id="IPR029063">
    <property type="entry name" value="SAM-dependent_MTases_sf"/>
</dbReference>
<dbReference type="InterPro" id="IPR036388">
    <property type="entry name" value="WH-like_DNA-bd_sf"/>
</dbReference>
<dbReference type="Pfam" id="PF13649">
    <property type="entry name" value="Methyltransf_25"/>
    <property type="match status" value="1"/>
</dbReference>
<dbReference type="SUPFAM" id="SSF53335">
    <property type="entry name" value="S-adenosyl-L-methionine-dependent methyltransferases"/>
    <property type="match status" value="1"/>
</dbReference>
<evidence type="ECO:0000269" key="1">
    <source>
    </source>
</evidence>
<evidence type="ECO:0000303" key="2">
    <source>
    </source>
</evidence>
<evidence type="ECO:0000305" key="3"/>
<evidence type="ECO:0000305" key="4">
    <source>
    </source>
</evidence>
<comment type="function">
    <text evidence="1 4">Methyltransferase; part of the gene cluster that mediates the biosynthesis of the unguisins, gamma-aminobutyric acid (GABA)-containing fungal cyclic heptapeptides with the amino acid sequence cyclo-(D-Ala1-D-Val2-L-Leu3-beta-MePhe4-D-Ala5-D-Trp6-GABA7) for unguisin H and cyclo-(D-Ala1-D-Ala2-L-Leu3-beta-MePhe4-D-Ala5-D-Trp6-GABA7) for unguisin I (PubMed:36715406). Within the pathway, the methyltransferase ungE' is probably involved in the synthesis of the (2R,3R)-beta-methylphenylalanine residue incorporated by the module 4 of the nonribosomal peptide synthetase (NRPS) ungA' (Probable). The alanine racemase ungC' catalyzes the interconversion of L-alanine and D-alanine, providing the D-alanine which is accepted by the first adenylation domain of ungA' (Probable). UngA' is the main enzyme within the cluster which condenses the 7 residues using its respective 7 modules (Probable). The terminal condensation domain (Ct) is involved in cyclization with D-alanine and thereby releasing of unguisins H and I (Probable). Finally, the hydrolase ungD' catalyzes the hydrolysis between the D-tryptophan and GABA residues of unguisins H and I to produce the corresponding linear peptides (Probable).</text>
</comment>
<comment type="pathway">
    <text evidence="4">Secondary metabolite biosynthesis.</text>
</comment>
<comment type="similarity">
    <text evidence="3">Belongs to the methyltransferase superfamily.</text>
</comment>
<feature type="chain" id="PRO_0000458914" description="Methyltransferase ungE'">
    <location>
        <begin position="1"/>
        <end position="342"/>
    </location>
</feature>
<name>UNGE_ASPC2</name>
<reference key="1">
    <citation type="submission" date="2016-12" db="EMBL/GenBank/DDBJ databases">
        <title>The genomes of Aspergillus section Nigri reveals drivers in fungal speciation.</title>
        <authorList>
            <consortium name="DOE Joint Genome Institute"/>
            <person name="Vesth T.C."/>
            <person name="Nybo J."/>
            <person name="Theobald S."/>
            <person name="Brandl J."/>
            <person name="Frisvad J.C."/>
            <person name="Nielsen K.F."/>
            <person name="Lyhne E.K."/>
            <person name="Kogle M.E."/>
            <person name="Kuo A."/>
            <person name="Riley R."/>
            <person name="Clum A."/>
            <person name="Nolan M."/>
            <person name="Lipzen A."/>
            <person name="Salamov A."/>
            <person name="Henrissat B."/>
            <person name="Wiebenga A."/>
            <person name="De Vries R.P."/>
            <person name="Grigoriev I.V."/>
            <person name="Mortensen U.H."/>
            <person name="Andersen M.R."/>
            <person name="Baker S.E."/>
        </authorList>
    </citation>
    <scope>NUCLEOTIDE SEQUENCE [LARGE SCALE GENOMIC DNA]</scope>
    <source>
        <strain>IBT 28561</strain>
    </source>
</reference>
<reference key="2">
    <citation type="journal article" date="2023" name="J. Nat. Prod.">
        <title>Biosynthetic characterization, heterologous production, and genomics-guided discovery of GABA-containing fungal heptapeptides.</title>
        <authorList>
            <person name="Wei X."/>
            <person name="Chan T.K."/>
            <person name="Kong C.T.D."/>
            <person name="Matsuda Y."/>
        </authorList>
    </citation>
    <scope>FUNCTION</scope>
    <scope>PATHWAY</scope>
</reference>
<protein>
    <recommendedName>
        <fullName evidence="2">Methyltransferase ungE'</fullName>
        <ecNumber evidence="4">2.1.1.-</ecNumber>
    </recommendedName>
    <alternativeName>
        <fullName evidence="2">Unguisins biosynthesis cluster protein E'</fullName>
    </alternativeName>
</protein>
<organism>
    <name type="scientific">Aspergillus campestris (strain IBT 28561)</name>
    <dbReference type="NCBI Taxonomy" id="1392248"/>
    <lineage>
        <taxon>Eukaryota</taxon>
        <taxon>Fungi</taxon>
        <taxon>Dikarya</taxon>
        <taxon>Ascomycota</taxon>
        <taxon>Pezizomycotina</taxon>
        <taxon>Eurotiomycetes</taxon>
        <taxon>Eurotiomycetidae</taxon>
        <taxon>Eurotiales</taxon>
        <taxon>Aspergillaceae</taxon>
        <taxon>Aspergillus</taxon>
        <taxon>Aspergillus subgen. Circumdati</taxon>
    </lineage>
</organism>
<sequence>MGSWTSDPAPPMAEVFNSAVAAVAIGAAWEVGLLDAVKDQKKVDVFQFAAENDLDRPSVQGLVAALAVVQVVALEQNTVVAGRQLEEAYRTKSLFHWLCLGSGGLFSRMQYVLRNEHRTGDFHRRDPAAIAHACHDINKQYFDPAFWAAMDGLDYPVQSVVDLGCGSGQRLMQILDRHPQASAIGIDVAGPAIQVAARDAVARGFGNRLVFREGDAREVSYRDEFEHVDLLTCFMMGHDFWPRDKCIATLQRLRRVFPAARRLLLGDATRILLDTPGGQQAVRNGTVPIFTLGFEVGHAMMGVYLPTIDEWEGVFAEGGWRCVKKHLIESLSLSVVFELEHA</sequence>
<keyword id="KW-0489">Methyltransferase</keyword>
<keyword id="KW-0949">S-adenosyl-L-methionine</keyword>
<keyword id="KW-0808">Transferase</keyword>
<gene>
    <name evidence="2" type="primary">ungE'</name>
    <name type="ORF">P168DRAFT_304453</name>
</gene>